<accession>P55174</accession>
<sequence>MSASLFWKCSCPRRITLCPHWRPCQRLRVSLRHAPHLKRCAATLRVAAGSHDVPLAWPGLAHFLEHLLFLGTERFPVEQGLMAYVRAQGGQLNARTCERATEFFFELPASAFAGGLERLCEMLAQPRMSLEDQHREREVLHAEFIAWSRDATAQRQFALFDGLHAAHPLRAFHAGNRYSLNLPNNAFQQALQQFHREYYQAGQMVLSLAGPQPLEELRALAERYGSCLPSGQHLEQTAPPALMTTGNQTYQQLSGQRLDLLFALERLPAGATAAVDFLCTWLQSAKPGGLLAELQQRQLAHSLKATLLYEFAGQALLHLEFDLTSVAASAPVQVRELLTEWLGFFSAQADWAPLREEYVLLQQRQIEVASALELSRRDSRQAADGLDESGLAALKQVLKQLQPQAVEHFSHDWRLPPANPFLRSTIEAPRAGLIRGQTSAHRGLRTFAQDRSRGRKESSALSFSQALPADPSGSALTLRWQLASPAPMGLHARLLRSLATLRDDARQAGVELIFTSCGKDWLLKLHGLPSPMPAVLLQALKALGRPAESFWQEQASVNAEAPLLTIRQLLKAFSEQPQPDSPAQPDPEALQALWASARWDGLGLALPAAIQEALSRTLQQMPGTADATLCRPVPAGTGQQWQNLPGSAGEHALLLFYPVPSASLADEAAWRLLGQLCQTPFYQRLRVELQLGYGVFSAVRQRNGRTGLLFGVQSPGATVTEILQHIAQFLEHLPEQLQALDEPSWNDQQQALAQQLQPATLPLDQAMELLWQAKLAGHSSDYLPQLQGCIEALTPAIVIQAARQLREAAGGCSALANRPCPGTPWQVAE</sequence>
<dbReference type="EC" id="3.4.24.-"/>
<dbReference type="EMBL" id="X87299">
    <property type="protein sequence ID" value="CAA60730.1"/>
    <property type="molecule type" value="Genomic_DNA"/>
</dbReference>
<dbReference type="PIR" id="S58241">
    <property type="entry name" value="S58241"/>
</dbReference>
<dbReference type="SMR" id="P55174"/>
<dbReference type="eggNOG" id="COG1025">
    <property type="taxonomic scope" value="Bacteria"/>
</dbReference>
<dbReference type="UniPathway" id="UPA00539"/>
<dbReference type="GO" id="GO:0005737">
    <property type="term" value="C:cytoplasm"/>
    <property type="evidence" value="ECO:0007669"/>
    <property type="project" value="UniProtKB-ARBA"/>
</dbReference>
<dbReference type="GO" id="GO:0004222">
    <property type="term" value="F:metalloendopeptidase activity"/>
    <property type="evidence" value="ECO:0007669"/>
    <property type="project" value="InterPro"/>
</dbReference>
<dbReference type="GO" id="GO:0008270">
    <property type="term" value="F:zinc ion binding"/>
    <property type="evidence" value="ECO:0007669"/>
    <property type="project" value="InterPro"/>
</dbReference>
<dbReference type="GO" id="GO:0006508">
    <property type="term" value="P:proteolysis"/>
    <property type="evidence" value="ECO:0007669"/>
    <property type="project" value="UniProtKB-KW"/>
</dbReference>
<dbReference type="GO" id="GO:0018189">
    <property type="term" value="P:pyrroloquinoline quinone biosynthetic process"/>
    <property type="evidence" value="ECO:0007669"/>
    <property type="project" value="UniProtKB-UniPathway"/>
</dbReference>
<dbReference type="Gene3D" id="3.30.830.10">
    <property type="entry name" value="Metalloenzyme, LuxS/M16 peptidase-like"/>
    <property type="match status" value="2"/>
</dbReference>
<dbReference type="InterPro" id="IPR011249">
    <property type="entry name" value="Metalloenz_LuxS/M16"/>
</dbReference>
<dbReference type="InterPro" id="IPR011765">
    <property type="entry name" value="Pept_M16_N"/>
</dbReference>
<dbReference type="InterPro" id="IPR001431">
    <property type="entry name" value="Pept_M16_Zn_BS"/>
</dbReference>
<dbReference type="InterPro" id="IPR050626">
    <property type="entry name" value="Peptidase_M16"/>
</dbReference>
<dbReference type="InterPro" id="IPR007863">
    <property type="entry name" value="Peptidase_M16_C"/>
</dbReference>
<dbReference type="InterPro" id="IPR011844">
    <property type="entry name" value="PQQ_synth_PqqF"/>
</dbReference>
<dbReference type="InterPro" id="IPR054734">
    <property type="entry name" value="PqqF-like_C_4"/>
</dbReference>
<dbReference type="InterPro" id="IPR054733">
    <property type="entry name" value="PqqF_C_3"/>
</dbReference>
<dbReference type="NCBIfam" id="TIGR02110">
    <property type="entry name" value="PQQ_syn_pqqF"/>
    <property type="match status" value="1"/>
</dbReference>
<dbReference type="PANTHER" id="PTHR43690:SF18">
    <property type="entry name" value="INSULIN-DEGRADING ENZYME-RELATED"/>
    <property type="match status" value="1"/>
</dbReference>
<dbReference type="PANTHER" id="PTHR43690">
    <property type="entry name" value="NARDILYSIN"/>
    <property type="match status" value="1"/>
</dbReference>
<dbReference type="Pfam" id="PF00675">
    <property type="entry name" value="Peptidase_M16"/>
    <property type="match status" value="1"/>
</dbReference>
<dbReference type="Pfam" id="PF05193">
    <property type="entry name" value="Peptidase_M16_C"/>
    <property type="match status" value="1"/>
</dbReference>
<dbReference type="Pfam" id="PF22456">
    <property type="entry name" value="PqqF-like_C_4"/>
    <property type="match status" value="1"/>
</dbReference>
<dbReference type="Pfam" id="PF22455">
    <property type="entry name" value="PqqF_C_3"/>
    <property type="match status" value="1"/>
</dbReference>
<dbReference type="SUPFAM" id="SSF63411">
    <property type="entry name" value="LuxS/MPP-like metallohydrolase"/>
    <property type="match status" value="3"/>
</dbReference>
<dbReference type="PROSITE" id="PS00143">
    <property type="entry name" value="INSULINASE"/>
    <property type="match status" value="1"/>
</dbReference>
<feature type="chain" id="PRO_0000074412" description="Coenzyme PQQ synthesis protein F">
    <location>
        <begin position="1"/>
        <end position="829"/>
    </location>
</feature>
<feature type="active site" description="Proton acceptor" evidence="2">
    <location>
        <position position="65"/>
    </location>
</feature>
<feature type="binding site" evidence="2">
    <location>
        <position position="62"/>
    </location>
    <ligand>
        <name>Zn(2+)</name>
        <dbReference type="ChEBI" id="CHEBI:29105"/>
    </ligand>
</feature>
<feature type="binding site" evidence="2">
    <location>
        <position position="66"/>
    </location>
    <ligand>
        <name>Zn(2+)</name>
        <dbReference type="ChEBI" id="CHEBI:29105"/>
    </ligand>
</feature>
<feature type="binding site" evidence="2">
    <location>
        <position position="143"/>
    </location>
    <ligand>
        <name>Zn(2+)</name>
        <dbReference type="ChEBI" id="CHEBI:29105"/>
    </ligand>
</feature>
<proteinExistence type="inferred from homology"/>
<gene>
    <name type="primary">pqqF</name>
</gene>
<comment type="function">
    <text evidence="1">Required for coenzyme pyrroloquinoline quinone (PQQ) biosynthesis. It is thought that this protein is a protease that cleaves peptides bond in a small peptide (gene pqqA), providing the glutamate and tyrosine residues which are necessary for the synthesis of PQQ (By similarity).</text>
</comment>
<comment type="cofactor">
    <cofactor evidence="1">
        <name>Zn(2+)</name>
        <dbReference type="ChEBI" id="CHEBI:29105"/>
    </cofactor>
    <text evidence="1">Binds 1 zinc ion per subunit.</text>
</comment>
<comment type="pathway">
    <text>Cofactor biosynthesis; pyrroloquinoline quinone biosynthesis.</text>
</comment>
<comment type="similarity">
    <text evidence="3">Belongs to the peptidase M16 family.</text>
</comment>
<evidence type="ECO:0000250" key="1"/>
<evidence type="ECO:0000255" key="2">
    <source>
        <dbReference type="PROSITE-ProRule" id="PRU10096"/>
    </source>
</evidence>
<evidence type="ECO:0000305" key="3"/>
<protein>
    <recommendedName>
        <fullName>Coenzyme PQQ synthesis protein F</fullName>
        <ecNumber>3.4.24.-</ecNumber>
    </recommendedName>
    <alternativeName>
        <fullName>Pyrroloquinoline quinone biosynthesis protein F</fullName>
    </alternativeName>
</protein>
<organism>
    <name type="scientific">Pseudomonas protegens (strain DSM 19095 / LMG 27888 / CFBP 6595 / CHA0)</name>
    <dbReference type="NCBI Taxonomy" id="1124983"/>
    <lineage>
        <taxon>Bacteria</taxon>
        <taxon>Pseudomonadati</taxon>
        <taxon>Pseudomonadota</taxon>
        <taxon>Gammaproteobacteria</taxon>
        <taxon>Pseudomonadales</taxon>
        <taxon>Pseudomonadaceae</taxon>
        <taxon>Pseudomonas</taxon>
    </lineage>
</organism>
<reference key="1">
    <citation type="journal article" date="1995" name="Appl. Environ. Microbiol.">
        <title>Tn5-directed cloning of pqq genes from Pseudomonas fluorescens CHA0: mutational inactivation of the genes results in overproduction of the antibiotic pyoluteorin.</title>
        <authorList>
            <person name="Schnider U."/>
            <person name="Keel C."/>
            <person name="Defago G."/>
            <person name="Haas D."/>
        </authorList>
    </citation>
    <scope>NUCLEOTIDE SEQUENCE [GENOMIC DNA]</scope>
    <source>
        <strain>DSM 19095 / LMG 27888 / CFBP 6595 / CHA0</strain>
    </source>
</reference>
<name>PQQF_PSEPH</name>
<keyword id="KW-0378">Hydrolase</keyword>
<keyword id="KW-0479">Metal-binding</keyword>
<keyword id="KW-0482">Metalloprotease</keyword>
<keyword id="KW-0884">PQQ biosynthesis</keyword>
<keyword id="KW-0645">Protease</keyword>
<keyword id="KW-0862">Zinc</keyword>